<keyword id="KW-0004">4Fe-4S</keyword>
<keyword id="KW-0028">Amino-acid biosynthesis</keyword>
<keyword id="KW-0198">Cysteine biosynthesis</keyword>
<keyword id="KW-0349">Heme</keyword>
<keyword id="KW-0408">Iron</keyword>
<keyword id="KW-0411">Iron-sulfur</keyword>
<keyword id="KW-0479">Metal-binding</keyword>
<keyword id="KW-0521">NADP</keyword>
<keyword id="KW-0560">Oxidoreductase</keyword>
<sequence>MSEKKLAVNEYLKTDSDYLRGTIQEGLDTAVTGAFSEGDQQLIKFHGFYQQDDRDLRNERKEQKLEPLYSFMLRARVAGGVCSPQQWLAVDDIASNLTSSNSIRLTTRQTFQYHGIPKRNLKTIIQDLDREALDSIAACGDVNRNVMCNPNPVESKLHQQAYAYAKQLSDNMLPHTKAYAEIWLDDEKLVTTEGEEVEPVYGKTYLPRKFKMAVAVPPDNDVDVYTNDLGFVAVAEEGELVGFNMVAGGGMGSTHGEVATFPRLADDFGYIKAEDTLKFAEAVMTVQRDWGNRENRKLSRLKYTIVKHGYDAFKAEVEKRTGIKFEPKRDVVIGDRGDRYGWKQGVDDNWHLTLFIEGGRVKDLPGQPLQTGLREIAKIHQGDFRMTSNQNIIIAGVPAADKDKIEALARQHGLMGKLITETRGHSIACVALPTCALAMAEAERYFPDFLTKVEALQDKHGFLDQGIVIRMTGCPNGCARPFAAEIGLVGKAPGRYNLYLGASFEGTRLNKLYRENIQEAEILAELDSLFARYVAERETGETFGNYTVRSGVVTAVIDAAKDFHG</sequence>
<organism>
    <name type="scientific">Shewanella piezotolerans (strain WP3 / JCM 13877)</name>
    <dbReference type="NCBI Taxonomy" id="225849"/>
    <lineage>
        <taxon>Bacteria</taxon>
        <taxon>Pseudomonadati</taxon>
        <taxon>Pseudomonadota</taxon>
        <taxon>Gammaproteobacteria</taxon>
        <taxon>Alteromonadales</taxon>
        <taxon>Shewanellaceae</taxon>
        <taxon>Shewanella</taxon>
    </lineage>
</organism>
<feature type="chain" id="PRO_0000388517" description="Sulfite reductase [NADPH] hemoprotein beta-component">
    <location>
        <begin position="1"/>
        <end position="565"/>
    </location>
</feature>
<feature type="binding site" evidence="1">
    <location>
        <position position="429"/>
    </location>
    <ligand>
        <name>[4Fe-4S] cluster</name>
        <dbReference type="ChEBI" id="CHEBI:49883"/>
    </ligand>
</feature>
<feature type="binding site" evidence="1">
    <location>
        <position position="435"/>
    </location>
    <ligand>
        <name>[4Fe-4S] cluster</name>
        <dbReference type="ChEBI" id="CHEBI:49883"/>
    </ligand>
</feature>
<feature type="binding site" evidence="1">
    <location>
        <position position="474"/>
    </location>
    <ligand>
        <name>[4Fe-4S] cluster</name>
        <dbReference type="ChEBI" id="CHEBI:49883"/>
    </ligand>
</feature>
<feature type="binding site" evidence="1">
    <location>
        <position position="478"/>
    </location>
    <ligand>
        <name>[4Fe-4S] cluster</name>
        <dbReference type="ChEBI" id="CHEBI:49883"/>
    </ligand>
</feature>
<feature type="binding site" description="axial binding residue" evidence="1">
    <location>
        <position position="478"/>
    </location>
    <ligand>
        <name>siroheme</name>
        <dbReference type="ChEBI" id="CHEBI:60052"/>
    </ligand>
    <ligandPart>
        <name>Fe</name>
        <dbReference type="ChEBI" id="CHEBI:18248"/>
    </ligandPart>
</feature>
<dbReference type="EC" id="1.8.1.2" evidence="1"/>
<dbReference type="EMBL" id="CP000472">
    <property type="protein sequence ID" value="ACJ27662.1"/>
    <property type="molecule type" value="Genomic_DNA"/>
</dbReference>
<dbReference type="RefSeq" id="WP_020911041.1">
    <property type="nucleotide sequence ID" value="NC_011566.1"/>
</dbReference>
<dbReference type="SMR" id="B8CJV9"/>
<dbReference type="STRING" id="225849.swp_0853"/>
<dbReference type="KEGG" id="swp:swp_0853"/>
<dbReference type="eggNOG" id="COG0155">
    <property type="taxonomic scope" value="Bacteria"/>
</dbReference>
<dbReference type="HOGENOM" id="CLU_001975_3_2_6"/>
<dbReference type="OrthoDB" id="3189055at2"/>
<dbReference type="UniPathway" id="UPA00140">
    <property type="reaction ID" value="UER00207"/>
</dbReference>
<dbReference type="Proteomes" id="UP000000753">
    <property type="component" value="Chromosome"/>
</dbReference>
<dbReference type="GO" id="GO:0009337">
    <property type="term" value="C:sulfite reductase complex (NADPH)"/>
    <property type="evidence" value="ECO:0007669"/>
    <property type="project" value="InterPro"/>
</dbReference>
<dbReference type="GO" id="GO:0051539">
    <property type="term" value="F:4 iron, 4 sulfur cluster binding"/>
    <property type="evidence" value="ECO:0007669"/>
    <property type="project" value="UniProtKB-KW"/>
</dbReference>
<dbReference type="GO" id="GO:0020037">
    <property type="term" value="F:heme binding"/>
    <property type="evidence" value="ECO:0007669"/>
    <property type="project" value="InterPro"/>
</dbReference>
<dbReference type="GO" id="GO:0046872">
    <property type="term" value="F:metal ion binding"/>
    <property type="evidence" value="ECO:0007669"/>
    <property type="project" value="UniProtKB-KW"/>
</dbReference>
<dbReference type="GO" id="GO:0050661">
    <property type="term" value="F:NADP binding"/>
    <property type="evidence" value="ECO:0007669"/>
    <property type="project" value="InterPro"/>
</dbReference>
<dbReference type="GO" id="GO:0050311">
    <property type="term" value="F:sulfite reductase (ferredoxin) activity"/>
    <property type="evidence" value="ECO:0007669"/>
    <property type="project" value="TreeGrafter"/>
</dbReference>
<dbReference type="GO" id="GO:0004783">
    <property type="term" value="F:sulfite reductase (NADPH) activity"/>
    <property type="evidence" value="ECO:0007669"/>
    <property type="project" value="UniProtKB-UniRule"/>
</dbReference>
<dbReference type="GO" id="GO:0019344">
    <property type="term" value="P:cysteine biosynthetic process"/>
    <property type="evidence" value="ECO:0007669"/>
    <property type="project" value="UniProtKB-KW"/>
</dbReference>
<dbReference type="GO" id="GO:0070814">
    <property type="term" value="P:hydrogen sulfide biosynthetic process"/>
    <property type="evidence" value="ECO:0007669"/>
    <property type="project" value="UniProtKB-UniRule"/>
</dbReference>
<dbReference type="GO" id="GO:0000103">
    <property type="term" value="P:sulfate assimilation"/>
    <property type="evidence" value="ECO:0007669"/>
    <property type="project" value="UniProtKB-UniRule"/>
</dbReference>
<dbReference type="FunFam" id="3.30.413.10:FF:000003">
    <property type="entry name" value="Sulfite reductase [NADPH] hemoprotein beta-component"/>
    <property type="match status" value="1"/>
</dbReference>
<dbReference type="FunFam" id="3.30.413.10:FF:000004">
    <property type="entry name" value="Sulfite reductase [NADPH] hemoprotein beta-component"/>
    <property type="match status" value="1"/>
</dbReference>
<dbReference type="Gene3D" id="3.90.480.20">
    <property type="match status" value="1"/>
</dbReference>
<dbReference type="Gene3D" id="3.30.413.10">
    <property type="entry name" value="Sulfite Reductase Hemoprotein, domain 1"/>
    <property type="match status" value="2"/>
</dbReference>
<dbReference type="Gene3D" id="3.90.480.10">
    <property type="entry name" value="Sulfite Reductase Hemoprotein,Domain 2"/>
    <property type="match status" value="1"/>
</dbReference>
<dbReference type="HAMAP" id="MF_01540">
    <property type="entry name" value="CysI"/>
    <property type="match status" value="1"/>
</dbReference>
<dbReference type="InterPro" id="IPR011786">
    <property type="entry name" value="CysI"/>
</dbReference>
<dbReference type="InterPro" id="IPR005117">
    <property type="entry name" value="NiRdtase/SiRdtase_haem-b_fer"/>
</dbReference>
<dbReference type="InterPro" id="IPR036136">
    <property type="entry name" value="Nit/Sulf_reduc_fer-like_dom_sf"/>
</dbReference>
<dbReference type="InterPro" id="IPR006067">
    <property type="entry name" value="NO2/SO3_Rdtase_4Fe4S_dom"/>
</dbReference>
<dbReference type="InterPro" id="IPR045169">
    <property type="entry name" value="NO2/SO3_Rdtase_4Fe4S_prot"/>
</dbReference>
<dbReference type="InterPro" id="IPR045854">
    <property type="entry name" value="NO2/SO3_Rdtase_4Fe4S_sf"/>
</dbReference>
<dbReference type="InterPro" id="IPR006066">
    <property type="entry name" value="NO2/SO3_Rdtase_FeS/sirohaem_BS"/>
</dbReference>
<dbReference type="NCBIfam" id="TIGR02041">
    <property type="entry name" value="CysI"/>
    <property type="match status" value="1"/>
</dbReference>
<dbReference type="NCBIfam" id="NF010029">
    <property type="entry name" value="PRK13504.1"/>
    <property type="match status" value="1"/>
</dbReference>
<dbReference type="PANTHER" id="PTHR11493:SF47">
    <property type="entry name" value="SULFITE REDUCTASE [NADPH] SUBUNIT BETA"/>
    <property type="match status" value="1"/>
</dbReference>
<dbReference type="PANTHER" id="PTHR11493">
    <property type="entry name" value="SULFITE REDUCTASE [NADPH] SUBUNIT BETA-RELATED"/>
    <property type="match status" value="1"/>
</dbReference>
<dbReference type="Pfam" id="PF01077">
    <property type="entry name" value="NIR_SIR"/>
    <property type="match status" value="1"/>
</dbReference>
<dbReference type="Pfam" id="PF03460">
    <property type="entry name" value="NIR_SIR_ferr"/>
    <property type="match status" value="2"/>
</dbReference>
<dbReference type="PRINTS" id="PR00397">
    <property type="entry name" value="SIROHAEM"/>
</dbReference>
<dbReference type="SUPFAM" id="SSF56014">
    <property type="entry name" value="Nitrite and sulphite reductase 4Fe-4S domain-like"/>
    <property type="match status" value="2"/>
</dbReference>
<dbReference type="SUPFAM" id="SSF55124">
    <property type="entry name" value="Nitrite/Sulfite reductase N-terminal domain-like"/>
    <property type="match status" value="2"/>
</dbReference>
<dbReference type="PROSITE" id="PS00365">
    <property type="entry name" value="NIR_SIR"/>
    <property type="match status" value="1"/>
</dbReference>
<comment type="function">
    <text evidence="1">Component of the sulfite reductase complex that catalyzes the 6-electron reduction of sulfite to sulfide. This is one of several activities required for the biosynthesis of L-cysteine from sulfate.</text>
</comment>
<comment type="catalytic activity">
    <reaction evidence="1">
        <text>hydrogen sulfide + 3 NADP(+) + 3 H2O = sulfite + 3 NADPH + 4 H(+)</text>
        <dbReference type="Rhea" id="RHEA:13801"/>
        <dbReference type="ChEBI" id="CHEBI:15377"/>
        <dbReference type="ChEBI" id="CHEBI:15378"/>
        <dbReference type="ChEBI" id="CHEBI:17359"/>
        <dbReference type="ChEBI" id="CHEBI:29919"/>
        <dbReference type="ChEBI" id="CHEBI:57783"/>
        <dbReference type="ChEBI" id="CHEBI:58349"/>
        <dbReference type="EC" id="1.8.1.2"/>
    </reaction>
</comment>
<comment type="cofactor">
    <cofactor evidence="1">
        <name>siroheme</name>
        <dbReference type="ChEBI" id="CHEBI:60052"/>
    </cofactor>
    <text evidence="1">Binds 1 siroheme per subunit.</text>
</comment>
<comment type="cofactor">
    <cofactor evidence="1">
        <name>[4Fe-4S] cluster</name>
        <dbReference type="ChEBI" id="CHEBI:49883"/>
    </cofactor>
    <text evidence="1">Binds 1 [4Fe-4S] cluster per subunit.</text>
</comment>
<comment type="pathway">
    <text evidence="1">Sulfur metabolism; hydrogen sulfide biosynthesis; hydrogen sulfide from sulfite (NADPH route): step 1/1.</text>
</comment>
<comment type="subunit">
    <text evidence="1">Alpha(8)-beta(8). The alpha component is a flavoprotein, the beta component is a hemoprotein.</text>
</comment>
<comment type="similarity">
    <text evidence="1">Belongs to the nitrite and sulfite reductase 4Fe-4S domain family.</text>
</comment>
<reference key="1">
    <citation type="journal article" date="2008" name="PLoS ONE">
        <title>Environmental adaptation: genomic analysis of the piezotolerant and psychrotolerant deep-sea iron reducing bacterium Shewanella piezotolerans WP3.</title>
        <authorList>
            <person name="Wang F."/>
            <person name="Wang J."/>
            <person name="Jian H."/>
            <person name="Zhang B."/>
            <person name="Li S."/>
            <person name="Wang F."/>
            <person name="Zeng X."/>
            <person name="Gao L."/>
            <person name="Bartlett D.H."/>
            <person name="Yu J."/>
            <person name="Hu S."/>
            <person name="Xiao X."/>
        </authorList>
    </citation>
    <scope>NUCLEOTIDE SEQUENCE [LARGE SCALE GENOMIC DNA]</scope>
    <source>
        <strain>WP3 / JCM 13877</strain>
    </source>
</reference>
<proteinExistence type="inferred from homology"/>
<evidence type="ECO:0000255" key="1">
    <source>
        <dbReference type="HAMAP-Rule" id="MF_01540"/>
    </source>
</evidence>
<protein>
    <recommendedName>
        <fullName evidence="1">Sulfite reductase [NADPH] hemoprotein beta-component</fullName>
        <shortName evidence="1">SiR-HP</shortName>
        <shortName evidence="1">SiRHP</shortName>
        <ecNumber evidence="1">1.8.1.2</ecNumber>
    </recommendedName>
</protein>
<gene>
    <name evidence="1" type="primary">cysI</name>
    <name type="ordered locus">swp_0853</name>
</gene>
<accession>B8CJV9</accession>
<name>CYSI_SHEPW</name>